<feature type="chain" id="PRO_1000021494" description="Ribonuclease P protein component">
    <location>
        <begin position="1"/>
        <end position="119"/>
    </location>
</feature>
<evidence type="ECO:0000255" key="1">
    <source>
        <dbReference type="HAMAP-Rule" id="MF_00227"/>
    </source>
</evidence>
<accession>Q1C0B6</accession>
<keyword id="KW-0255">Endonuclease</keyword>
<keyword id="KW-0378">Hydrolase</keyword>
<keyword id="KW-0540">Nuclease</keyword>
<keyword id="KW-0694">RNA-binding</keyword>
<keyword id="KW-0819">tRNA processing</keyword>
<name>RNPA_YERPA</name>
<organism>
    <name type="scientific">Yersinia pestis bv. Antiqua (strain Antiqua)</name>
    <dbReference type="NCBI Taxonomy" id="360102"/>
    <lineage>
        <taxon>Bacteria</taxon>
        <taxon>Pseudomonadati</taxon>
        <taxon>Pseudomonadota</taxon>
        <taxon>Gammaproteobacteria</taxon>
        <taxon>Enterobacterales</taxon>
        <taxon>Yersiniaceae</taxon>
        <taxon>Yersinia</taxon>
    </lineage>
</organism>
<gene>
    <name evidence="1" type="primary">rnpA</name>
    <name type="ordered locus">YPA_4145</name>
</gene>
<reference key="1">
    <citation type="journal article" date="2006" name="J. Bacteriol.">
        <title>Complete genome sequence of Yersinia pestis strains Antiqua and Nepal516: evidence of gene reduction in an emerging pathogen.</title>
        <authorList>
            <person name="Chain P.S.G."/>
            <person name="Hu P."/>
            <person name="Malfatti S.A."/>
            <person name="Radnedge L."/>
            <person name="Larimer F."/>
            <person name="Vergez L.M."/>
            <person name="Worsham P."/>
            <person name="Chu M.C."/>
            <person name="Andersen G.L."/>
        </authorList>
    </citation>
    <scope>NUCLEOTIDE SEQUENCE [LARGE SCALE GENOMIC DNA]</scope>
    <source>
        <strain>Antiqua</strain>
    </source>
</reference>
<dbReference type="EC" id="3.1.26.5" evidence="1"/>
<dbReference type="EMBL" id="CP000308">
    <property type="protein sequence ID" value="ABG16106.1"/>
    <property type="molecule type" value="Genomic_DNA"/>
</dbReference>
<dbReference type="RefSeq" id="WP_002228153.1">
    <property type="nucleotide sequence ID" value="NZ_CP009906.1"/>
</dbReference>
<dbReference type="SMR" id="Q1C0B6"/>
<dbReference type="GeneID" id="57974623"/>
<dbReference type="KEGG" id="ypa:YPA_4145"/>
<dbReference type="Proteomes" id="UP000001971">
    <property type="component" value="Chromosome"/>
</dbReference>
<dbReference type="GO" id="GO:0030677">
    <property type="term" value="C:ribonuclease P complex"/>
    <property type="evidence" value="ECO:0007669"/>
    <property type="project" value="TreeGrafter"/>
</dbReference>
<dbReference type="GO" id="GO:0042781">
    <property type="term" value="F:3'-tRNA processing endoribonuclease activity"/>
    <property type="evidence" value="ECO:0007669"/>
    <property type="project" value="TreeGrafter"/>
</dbReference>
<dbReference type="GO" id="GO:0004526">
    <property type="term" value="F:ribonuclease P activity"/>
    <property type="evidence" value="ECO:0007669"/>
    <property type="project" value="UniProtKB-UniRule"/>
</dbReference>
<dbReference type="GO" id="GO:0000049">
    <property type="term" value="F:tRNA binding"/>
    <property type="evidence" value="ECO:0007669"/>
    <property type="project" value="UniProtKB-UniRule"/>
</dbReference>
<dbReference type="GO" id="GO:0001682">
    <property type="term" value="P:tRNA 5'-leader removal"/>
    <property type="evidence" value="ECO:0007669"/>
    <property type="project" value="UniProtKB-UniRule"/>
</dbReference>
<dbReference type="FunFam" id="3.30.230.10:FF:000016">
    <property type="entry name" value="Ribonuclease P protein component"/>
    <property type="match status" value="1"/>
</dbReference>
<dbReference type="Gene3D" id="3.30.230.10">
    <property type="match status" value="1"/>
</dbReference>
<dbReference type="HAMAP" id="MF_00227">
    <property type="entry name" value="RNase_P"/>
    <property type="match status" value="1"/>
</dbReference>
<dbReference type="InterPro" id="IPR020568">
    <property type="entry name" value="Ribosomal_Su5_D2-typ_SF"/>
</dbReference>
<dbReference type="InterPro" id="IPR014721">
    <property type="entry name" value="Ribsml_uS5_D2-typ_fold_subgr"/>
</dbReference>
<dbReference type="InterPro" id="IPR000100">
    <property type="entry name" value="RNase_P"/>
</dbReference>
<dbReference type="InterPro" id="IPR020539">
    <property type="entry name" value="RNase_P_CS"/>
</dbReference>
<dbReference type="NCBIfam" id="TIGR00188">
    <property type="entry name" value="rnpA"/>
    <property type="match status" value="1"/>
</dbReference>
<dbReference type="PANTHER" id="PTHR33992">
    <property type="entry name" value="RIBONUCLEASE P PROTEIN COMPONENT"/>
    <property type="match status" value="1"/>
</dbReference>
<dbReference type="PANTHER" id="PTHR33992:SF1">
    <property type="entry name" value="RIBONUCLEASE P PROTEIN COMPONENT"/>
    <property type="match status" value="1"/>
</dbReference>
<dbReference type="Pfam" id="PF00825">
    <property type="entry name" value="Ribonuclease_P"/>
    <property type="match status" value="1"/>
</dbReference>
<dbReference type="SUPFAM" id="SSF54211">
    <property type="entry name" value="Ribosomal protein S5 domain 2-like"/>
    <property type="match status" value="1"/>
</dbReference>
<dbReference type="PROSITE" id="PS00648">
    <property type="entry name" value="RIBONUCLEASE_P"/>
    <property type="match status" value="1"/>
</dbReference>
<comment type="function">
    <text evidence="1">RNaseP catalyzes the removal of the 5'-leader sequence from pre-tRNA to produce the mature 5'-terminus. It can also cleave other RNA substrates such as 4.5S RNA. The protein component plays an auxiliary but essential role in vivo by binding to the 5'-leader sequence and broadening the substrate specificity of the ribozyme.</text>
</comment>
<comment type="catalytic activity">
    <reaction evidence="1">
        <text>Endonucleolytic cleavage of RNA, removing 5'-extranucleotides from tRNA precursor.</text>
        <dbReference type="EC" id="3.1.26.5"/>
    </reaction>
</comment>
<comment type="subunit">
    <text evidence="1">Consists of a catalytic RNA component (M1 or rnpB) and a protein subunit.</text>
</comment>
<comment type="similarity">
    <text evidence="1">Belongs to the RnpA family.</text>
</comment>
<proteinExistence type="inferred from homology"/>
<sequence>MVKLAFPRELRLLTPSHFTFVFQQPQRAGTPQITILGRLNELGHPRIGLTVAKKHVKRAHERNRIKRLTRESFRLHQHALPSMDFVVLVKKGVADLDNRALTEALEKLWRRHCRQAPAS</sequence>
<protein>
    <recommendedName>
        <fullName evidence="1">Ribonuclease P protein component</fullName>
        <shortName evidence="1">RNase P protein</shortName>
        <shortName evidence="1">RNaseP protein</shortName>
        <ecNumber evidence="1">3.1.26.5</ecNumber>
    </recommendedName>
    <alternativeName>
        <fullName evidence="1">Protein C5</fullName>
    </alternativeName>
</protein>